<feature type="chain" id="PRO_0000368282" description="ATP synthase subunit b 1">
    <location>
        <begin position="1"/>
        <end position="173"/>
    </location>
</feature>
<feature type="transmembrane region" description="Helical" evidence="1">
    <location>
        <begin position="15"/>
        <end position="37"/>
    </location>
</feature>
<comment type="function">
    <text evidence="1">F(1)F(0) ATP synthase produces ATP from ADP in the presence of a proton or sodium gradient. F-type ATPases consist of two structural domains, F(1) containing the extramembraneous catalytic core and F(0) containing the membrane proton channel, linked together by a central stalk and a peripheral stalk. During catalysis, ATP synthesis in the catalytic domain of F(1) is coupled via a rotary mechanism of the central stalk subunits to proton translocation.</text>
</comment>
<comment type="function">
    <text evidence="1">Component of the F(0) channel, it forms part of the peripheral stalk, linking F(1) to F(0).</text>
</comment>
<comment type="subunit">
    <text evidence="1">F-type ATPases have 2 components, F(1) - the catalytic core - and F(0) - the membrane proton channel. F(1) has five subunits: alpha(3), beta(3), gamma(1), delta(1), epsilon(1). F(0) has three main subunits: a(1), b(2) and c(10-14). The alpha and beta chains form an alternating ring which encloses part of the gamma chain. F(1) is attached to F(0) by a central stalk formed by the gamma and epsilon chains, while a peripheral stalk is formed by the delta and b chains.</text>
</comment>
<comment type="subcellular location">
    <subcellularLocation>
        <location evidence="1">Cell inner membrane</location>
        <topology evidence="1">Single-pass membrane protein</topology>
    </subcellularLocation>
</comment>
<comment type="similarity">
    <text evidence="1">Belongs to the ATPase B chain family.</text>
</comment>
<gene>
    <name evidence="1" type="primary">atpF1</name>
    <name type="ordered locus">Acry_0394</name>
</gene>
<keyword id="KW-0066">ATP synthesis</keyword>
<keyword id="KW-0997">Cell inner membrane</keyword>
<keyword id="KW-1003">Cell membrane</keyword>
<keyword id="KW-0138">CF(0)</keyword>
<keyword id="KW-0375">Hydrogen ion transport</keyword>
<keyword id="KW-0406">Ion transport</keyword>
<keyword id="KW-0472">Membrane</keyword>
<keyword id="KW-1185">Reference proteome</keyword>
<keyword id="KW-0812">Transmembrane</keyword>
<keyword id="KW-1133">Transmembrane helix</keyword>
<keyword id="KW-0813">Transport</keyword>
<organism>
    <name type="scientific">Acidiphilium cryptum (strain JF-5)</name>
    <dbReference type="NCBI Taxonomy" id="349163"/>
    <lineage>
        <taxon>Bacteria</taxon>
        <taxon>Pseudomonadati</taxon>
        <taxon>Pseudomonadota</taxon>
        <taxon>Alphaproteobacteria</taxon>
        <taxon>Acetobacterales</taxon>
        <taxon>Acidocellaceae</taxon>
        <taxon>Acidiphilium</taxon>
    </lineage>
</organism>
<evidence type="ECO:0000255" key="1">
    <source>
        <dbReference type="HAMAP-Rule" id="MF_01398"/>
    </source>
</evidence>
<dbReference type="EMBL" id="CP000697">
    <property type="protein sequence ID" value="ABQ29619.1"/>
    <property type="molecule type" value="Genomic_DNA"/>
</dbReference>
<dbReference type="RefSeq" id="WP_007422335.1">
    <property type="nucleotide sequence ID" value="NC_009484.1"/>
</dbReference>
<dbReference type="SMR" id="A5FVI7"/>
<dbReference type="STRING" id="349163.Acry_0394"/>
<dbReference type="KEGG" id="acr:Acry_0394"/>
<dbReference type="eggNOG" id="COG0711">
    <property type="taxonomic scope" value="Bacteria"/>
</dbReference>
<dbReference type="HOGENOM" id="CLU_079215_6_2_5"/>
<dbReference type="Proteomes" id="UP000000245">
    <property type="component" value="Chromosome"/>
</dbReference>
<dbReference type="GO" id="GO:0005886">
    <property type="term" value="C:plasma membrane"/>
    <property type="evidence" value="ECO:0007669"/>
    <property type="project" value="UniProtKB-SubCell"/>
</dbReference>
<dbReference type="GO" id="GO:0045259">
    <property type="term" value="C:proton-transporting ATP synthase complex"/>
    <property type="evidence" value="ECO:0007669"/>
    <property type="project" value="UniProtKB-KW"/>
</dbReference>
<dbReference type="GO" id="GO:0046933">
    <property type="term" value="F:proton-transporting ATP synthase activity, rotational mechanism"/>
    <property type="evidence" value="ECO:0007669"/>
    <property type="project" value="UniProtKB-UniRule"/>
</dbReference>
<dbReference type="GO" id="GO:0046961">
    <property type="term" value="F:proton-transporting ATPase activity, rotational mechanism"/>
    <property type="evidence" value="ECO:0007669"/>
    <property type="project" value="TreeGrafter"/>
</dbReference>
<dbReference type="CDD" id="cd06503">
    <property type="entry name" value="ATP-synt_Fo_b"/>
    <property type="match status" value="1"/>
</dbReference>
<dbReference type="HAMAP" id="MF_01398">
    <property type="entry name" value="ATP_synth_b_bprime"/>
    <property type="match status" value="1"/>
</dbReference>
<dbReference type="InterPro" id="IPR002146">
    <property type="entry name" value="ATP_synth_b/b'su_bac/chlpt"/>
</dbReference>
<dbReference type="InterPro" id="IPR050059">
    <property type="entry name" value="ATP_synthase_B_chain"/>
</dbReference>
<dbReference type="PANTHER" id="PTHR33445:SF1">
    <property type="entry name" value="ATP SYNTHASE SUBUNIT B"/>
    <property type="match status" value="1"/>
</dbReference>
<dbReference type="PANTHER" id="PTHR33445">
    <property type="entry name" value="ATP SYNTHASE SUBUNIT B', CHLOROPLASTIC"/>
    <property type="match status" value="1"/>
</dbReference>
<dbReference type="Pfam" id="PF00430">
    <property type="entry name" value="ATP-synt_B"/>
    <property type="match status" value="1"/>
</dbReference>
<name>ATPF1_ACICJ</name>
<protein>
    <recommendedName>
        <fullName evidence="1">ATP synthase subunit b 1</fullName>
    </recommendedName>
    <alternativeName>
        <fullName evidence="1">ATP synthase F(0) sector subunit b 1</fullName>
    </alternativeName>
    <alternativeName>
        <fullName evidence="1">ATPase subunit I 1</fullName>
    </alternativeName>
    <alternativeName>
        <fullName evidence="1">F-type ATPase subunit b 1</fullName>
        <shortName evidence="1">F-ATPase subunit b 1</shortName>
    </alternativeName>
</protein>
<accession>A5FVI7</accession>
<sequence length="173" mass="18688">MEYEALTGTLWDKGTFWVTVAVLIFLAFFGRKIVGAITTMLDQRSAAIQHELDEASRLRAEAEAMLKDAESRREAALAQAKDMLAMAGREAERLAADLLAEAEASARRREQMARERISAAEAAAIAEVRDAAAALAARAAEQILKETIDEAHDRGLIDQAIGGLPAALRQKAA</sequence>
<reference key="1">
    <citation type="submission" date="2007-05" db="EMBL/GenBank/DDBJ databases">
        <title>Complete sequence of chromosome of Acidiphilium cryptum JF-5.</title>
        <authorList>
            <consortium name="US DOE Joint Genome Institute"/>
            <person name="Copeland A."/>
            <person name="Lucas S."/>
            <person name="Lapidus A."/>
            <person name="Barry K."/>
            <person name="Detter J.C."/>
            <person name="Glavina del Rio T."/>
            <person name="Hammon N."/>
            <person name="Israni S."/>
            <person name="Dalin E."/>
            <person name="Tice H."/>
            <person name="Pitluck S."/>
            <person name="Sims D."/>
            <person name="Brettin T."/>
            <person name="Bruce D."/>
            <person name="Han C."/>
            <person name="Schmutz J."/>
            <person name="Larimer F."/>
            <person name="Land M."/>
            <person name="Hauser L."/>
            <person name="Kyrpides N."/>
            <person name="Kim E."/>
            <person name="Magnuson T."/>
            <person name="Richardson P."/>
        </authorList>
    </citation>
    <scope>NUCLEOTIDE SEQUENCE [LARGE SCALE GENOMIC DNA]</scope>
    <source>
        <strain>JF-5</strain>
    </source>
</reference>
<proteinExistence type="inferred from homology"/>